<sequence length="155" mass="17056">MNPIRKKRLYWILALLCGVSIAMALALSALQENINLFYTPSQIVAGEAPQGTRIRAGGMVENGSLMRTQDSLALRFSVTDGAHNITVRYQGILPDLFREGQGIVAMGKLDRNGSLIADEVLAKHDENYMPPEVIHALKQAGVLDNPKRVKQESTR</sequence>
<dbReference type="EMBL" id="CP000269">
    <property type="protein sequence ID" value="ABR89200.1"/>
    <property type="molecule type" value="Genomic_DNA"/>
</dbReference>
<dbReference type="RefSeq" id="WP_012078806.1">
    <property type="nucleotide sequence ID" value="NC_009659.1"/>
</dbReference>
<dbReference type="SMR" id="A6SWI5"/>
<dbReference type="STRING" id="375286.mma_0942"/>
<dbReference type="KEGG" id="mms:mma_0942"/>
<dbReference type="eggNOG" id="COG2332">
    <property type="taxonomic scope" value="Bacteria"/>
</dbReference>
<dbReference type="HOGENOM" id="CLU_079503_1_1_4"/>
<dbReference type="OrthoDB" id="9793584at2"/>
<dbReference type="Proteomes" id="UP000006388">
    <property type="component" value="Chromosome"/>
</dbReference>
<dbReference type="GO" id="GO:0005886">
    <property type="term" value="C:plasma membrane"/>
    <property type="evidence" value="ECO:0007669"/>
    <property type="project" value="UniProtKB-SubCell"/>
</dbReference>
<dbReference type="GO" id="GO:0020037">
    <property type="term" value="F:heme binding"/>
    <property type="evidence" value="ECO:0007669"/>
    <property type="project" value="InterPro"/>
</dbReference>
<dbReference type="GO" id="GO:0046872">
    <property type="term" value="F:metal ion binding"/>
    <property type="evidence" value="ECO:0007669"/>
    <property type="project" value="UniProtKB-KW"/>
</dbReference>
<dbReference type="GO" id="GO:0017004">
    <property type="term" value="P:cytochrome complex assembly"/>
    <property type="evidence" value="ECO:0007669"/>
    <property type="project" value="UniProtKB-KW"/>
</dbReference>
<dbReference type="FunFam" id="2.40.50.140:FF:000104">
    <property type="entry name" value="Cytochrome c-type biogenesis protein CcmE"/>
    <property type="match status" value="1"/>
</dbReference>
<dbReference type="Gene3D" id="2.40.50.140">
    <property type="entry name" value="Nucleic acid-binding proteins"/>
    <property type="match status" value="1"/>
</dbReference>
<dbReference type="HAMAP" id="MF_01959">
    <property type="entry name" value="CcmE"/>
    <property type="match status" value="1"/>
</dbReference>
<dbReference type="InterPro" id="IPR004329">
    <property type="entry name" value="CcmE"/>
</dbReference>
<dbReference type="InterPro" id="IPR036127">
    <property type="entry name" value="CcmE-like_sf"/>
</dbReference>
<dbReference type="InterPro" id="IPR012340">
    <property type="entry name" value="NA-bd_OB-fold"/>
</dbReference>
<dbReference type="NCBIfam" id="NF009727">
    <property type="entry name" value="PRK13254.1-1"/>
    <property type="match status" value="1"/>
</dbReference>
<dbReference type="NCBIfam" id="NF009729">
    <property type="entry name" value="PRK13254.1-3"/>
    <property type="match status" value="1"/>
</dbReference>
<dbReference type="NCBIfam" id="NF009731">
    <property type="entry name" value="PRK13254.1-5"/>
    <property type="match status" value="1"/>
</dbReference>
<dbReference type="PANTHER" id="PTHR34128">
    <property type="entry name" value="CYTOCHROME C-TYPE BIOGENESIS PROTEIN CCME HOMOLOG, MITOCHONDRIAL"/>
    <property type="match status" value="1"/>
</dbReference>
<dbReference type="PANTHER" id="PTHR34128:SF2">
    <property type="entry name" value="CYTOCHROME C-TYPE BIOGENESIS PROTEIN CCME HOMOLOG, MITOCHONDRIAL"/>
    <property type="match status" value="1"/>
</dbReference>
<dbReference type="Pfam" id="PF03100">
    <property type="entry name" value="CcmE"/>
    <property type="match status" value="1"/>
</dbReference>
<dbReference type="SUPFAM" id="SSF82093">
    <property type="entry name" value="Heme chaperone CcmE"/>
    <property type="match status" value="1"/>
</dbReference>
<evidence type="ECO:0000255" key="1">
    <source>
        <dbReference type="HAMAP-Rule" id="MF_01959"/>
    </source>
</evidence>
<accession>A6SWI5</accession>
<name>CCME_JANMA</name>
<comment type="function">
    <text evidence="1">Heme chaperone required for the biogenesis of c-type cytochromes. Transiently binds heme delivered by CcmC and transfers the heme to apo-cytochromes in a process facilitated by CcmF and CcmH.</text>
</comment>
<comment type="subcellular location">
    <subcellularLocation>
        <location evidence="1">Cell inner membrane</location>
        <topology evidence="1">Single-pass type II membrane protein</topology>
        <orientation evidence="1">Periplasmic side</orientation>
    </subcellularLocation>
</comment>
<comment type="similarity">
    <text evidence="1">Belongs to the CcmE/CycJ family.</text>
</comment>
<organism>
    <name type="scientific">Janthinobacterium sp. (strain Marseille)</name>
    <name type="common">Minibacterium massiliensis</name>
    <dbReference type="NCBI Taxonomy" id="375286"/>
    <lineage>
        <taxon>Bacteria</taxon>
        <taxon>Pseudomonadati</taxon>
        <taxon>Pseudomonadota</taxon>
        <taxon>Betaproteobacteria</taxon>
        <taxon>Burkholderiales</taxon>
        <taxon>Oxalobacteraceae</taxon>
        <taxon>Janthinobacterium</taxon>
    </lineage>
</organism>
<proteinExistence type="inferred from homology"/>
<protein>
    <recommendedName>
        <fullName evidence="1">Cytochrome c-type biogenesis protein CcmE</fullName>
    </recommendedName>
    <alternativeName>
        <fullName evidence="1">Cytochrome c maturation protein E</fullName>
    </alternativeName>
    <alternativeName>
        <fullName evidence="1">Heme chaperone CcmE</fullName>
    </alternativeName>
</protein>
<reference key="1">
    <citation type="journal article" date="2007" name="PLoS Genet.">
        <title>Genome analysis of Minibacterium massiliensis highlights the convergent evolution of water-living bacteria.</title>
        <authorList>
            <person name="Audic S."/>
            <person name="Robert C."/>
            <person name="Campagna B."/>
            <person name="Parinello H."/>
            <person name="Claverie J.-M."/>
            <person name="Raoult D."/>
            <person name="Drancourt M."/>
        </authorList>
    </citation>
    <scope>NUCLEOTIDE SEQUENCE [LARGE SCALE GENOMIC DNA]</scope>
    <source>
        <strain>Marseille</strain>
    </source>
</reference>
<feature type="chain" id="PRO_1000070818" description="Cytochrome c-type biogenesis protein CcmE">
    <location>
        <begin position="1"/>
        <end position="155"/>
    </location>
</feature>
<feature type="topological domain" description="Cytoplasmic" evidence="1">
    <location>
        <begin position="1"/>
        <end position="8"/>
    </location>
</feature>
<feature type="transmembrane region" description="Helical; Signal-anchor for type II membrane protein" evidence="1">
    <location>
        <begin position="9"/>
        <end position="29"/>
    </location>
</feature>
<feature type="topological domain" description="Periplasmic" evidence="1">
    <location>
        <begin position="30"/>
        <end position="155"/>
    </location>
</feature>
<feature type="binding site" description="covalent" evidence="1">
    <location>
        <position position="124"/>
    </location>
    <ligand>
        <name>heme</name>
        <dbReference type="ChEBI" id="CHEBI:30413"/>
    </ligand>
</feature>
<feature type="binding site" description="axial binding residue" evidence="1">
    <location>
        <position position="128"/>
    </location>
    <ligand>
        <name>heme</name>
        <dbReference type="ChEBI" id="CHEBI:30413"/>
    </ligand>
    <ligandPart>
        <name>Fe</name>
        <dbReference type="ChEBI" id="CHEBI:18248"/>
    </ligandPart>
</feature>
<keyword id="KW-0997">Cell inner membrane</keyword>
<keyword id="KW-1003">Cell membrane</keyword>
<keyword id="KW-0201">Cytochrome c-type biogenesis</keyword>
<keyword id="KW-0349">Heme</keyword>
<keyword id="KW-0408">Iron</keyword>
<keyword id="KW-0472">Membrane</keyword>
<keyword id="KW-0479">Metal-binding</keyword>
<keyword id="KW-0735">Signal-anchor</keyword>
<keyword id="KW-0812">Transmembrane</keyword>
<keyword id="KW-1133">Transmembrane helix</keyword>
<gene>
    <name evidence="1" type="primary">ccmE</name>
    <name evidence="1" type="synonym">cycJ</name>
    <name type="ordered locus">mma_0942</name>
</gene>